<sequence>MSGPRPVRAPRGSALTALGWQQEAALRMLQNNLDPEVAEHPDKLVVYGGTGKAARDWRSFDAMVRTLQTLKQDETMLVQSGRPVGVMQTHEWAPRVLIANSNLVGDWANWEEFRRLEALGLTMYGQMTAGSWIYIGTQGILQGTYETFAAVAAKKFGGTLAGTITLTAGLGGMGGAQPLAVTMNDGVAICIDVDPRAIERRIEHRYLDVKADSPEHALQLAVEARDARRPLSIGLLGNAAELLPRMLAESAPIDIVTDQTSAHDPLAYLPLGVDFDDMAGLAAEKPADFTRRARESMARHVEAMVGFMDAGAEVFDYGNSIRGEARLAGYDRAFDFPGFVPAYIRPLFCEGKGPFRWAALSGEASDIHKTDKAMLELFPENESLHRWIRMAGERVHFQGLPARICWLGYGERDKAGERFNDMVASGELAAPLAIGRDHLDCGSVASPYRETEAMLDGSDAIADWPLLNAMVNVASGASWVSLHHGGGVGMGRSIHAGQVSVADGTKLAGEKIRRVLTNDPGMGVIRHVDAGYDIAENVAADQGVRVPMTEGN</sequence>
<feature type="chain" id="PRO_1000129578" description="Urocanate hydratase">
    <location>
        <begin position="1"/>
        <end position="552"/>
    </location>
</feature>
<feature type="active site" evidence="1">
    <location>
        <position position="405"/>
    </location>
</feature>
<feature type="binding site" evidence="1">
    <location>
        <begin position="48"/>
        <end position="49"/>
    </location>
    <ligand>
        <name>NAD(+)</name>
        <dbReference type="ChEBI" id="CHEBI:57540"/>
    </ligand>
</feature>
<feature type="binding site" evidence="1">
    <location>
        <position position="126"/>
    </location>
    <ligand>
        <name>NAD(+)</name>
        <dbReference type="ChEBI" id="CHEBI:57540"/>
    </ligand>
</feature>
<feature type="binding site" evidence="1">
    <location>
        <begin position="172"/>
        <end position="174"/>
    </location>
    <ligand>
        <name>NAD(+)</name>
        <dbReference type="ChEBI" id="CHEBI:57540"/>
    </ligand>
</feature>
<feature type="binding site" evidence="1">
    <location>
        <position position="192"/>
    </location>
    <ligand>
        <name>NAD(+)</name>
        <dbReference type="ChEBI" id="CHEBI:57540"/>
    </ligand>
</feature>
<feature type="binding site" evidence="1">
    <location>
        <begin position="238"/>
        <end position="239"/>
    </location>
    <ligand>
        <name>NAD(+)</name>
        <dbReference type="ChEBI" id="CHEBI:57540"/>
    </ligand>
</feature>
<feature type="binding site" evidence="1">
    <location>
        <begin position="259"/>
        <end position="263"/>
    </location>
    <ligand>
        <name>NAD(+)</name>
        <dbReference type="ChEBI" id="CHEBI:57540"/>
    </ligand>
</feature>
<feature type="binding site" evidence="1">
    <location>
        <begin position="268"/>
        <end position="269"/>
    </location>
    <ligand>
        <name>NAD(+)</name>
        <dbReference type="ChEBI" id="CHEBI:57540"/>
    </ligand>
</feature>
<feature type="binding site" evidence="1">
    <location>
        <position position="317"/>
    </location>
    <ligand>
        <name>NAD(+)</name>
        <dbReference type="ChEBI" id="CHEBI:57540"/>
    </ligand>
</feature>
<feature type="binding site" evidence="1">
    <location>
        <position position="487"/>
    </location>
    <ligand>
        <name>NAD(+)</name>
        <dbReference type="ChEBI" id="CHEBI:57540"/>
    </ligand>
</feature>
<keyword id="KW-0963">Cytoplasm</keyword>
<keyword id="KW-0369">Histidine metabolism</keyword>
<keyword id="KW-0456">Lyase</keyword>
<keyword id="KW-0520">NAD</keyword>
<name>HUTU_STRGG</name>
<organism>
    <name type="scientific">Streptomyces griseus subsp. griseus (strain JCM 4626 / CBS 651.72 / NBRC 13350 / KCC S-0626 / ISP 5235)</name>
    <dbReference type="NCBI Taxonomy" id="455632"/>
    <lineage>
        <taxon>Bacteria</taxon>
        <taxon>Bacillati</taxon>
        <taxon>Actinomycetota</taxon>
        <taxon>Actinomycetes</taxon>
        <taxon>Kitasatosporales</taxon>
        <taxon>Streptomycetaceae</taxon>
        <taxon>Streptomyces</taxon>
    </lineage>
</organism>
<gene>
    <name evidence="1" type="primary">hutU</name>
    <name type="ordered locus">SGR_4462</name>
</gene>
<evidence type="ECO:0000255" key="1">
    <source>
        <dbReference type="HAMAP-Rule" id="MF_00577"/>
    </source>
</evidence>
<proteinExistence type="inferred from homology"/>
<accession>B1VUR5</accession>
<reference key="1">
    <citation type="journal article" date="2008" name="J. Bacteriol.">
        <title>Genome sequence of the streptomycin-producing microorganism Streptomyces griseus IFO 13350.</title>
        <authorList>
            <person name="Ohnishi Y."/>
            <person name="Ishikawa J."/>
            <person name="Hara H."/>
            <person name="Suzuki H."/>
            <person name="Ikenoya M."/>
            <person name="Ikeda H."/>
            <person name="Yamashita A."/>
            <person name="Hattori M."/>
            <person name="Horinouchi S."/>
        </authorList>
    </citation>
    <scope>NUCLEOTIDE SEQUENCE [LARGE SCALE GENOMIC DNA]</scope>
    <source>
        <strain>JCM 4626 / CBS 651.72 / NBRC 13350 / KCC S-0626 / ISP 5235</strain>
    </source>
</reference>
<comment type="function">
    <text evidence="1">Catalyzes the conversion of urocanate to 4-imidazolone-5-propionate.</text>
</comment>
<comment type="catalytic activity">
    <reaction evidence="1">
        <text>4-imidazolone-5-propanoate = trans-urocanate + H2O</text>
        <dbReference type="Rhea" id="RHEA:13101"/>
        <dbReference type="ChEBI" id="CHEBI:15377"/>
        <dbReference type="ChEBI" id="CHEBI:17771"/>
        <dbReference type="ChEBI" id="CHEBI:77893"/>
        <dbReference type="EC" id="4.2.1.49"/>
    </reaction>
</comment>
<comment type="cofactor">
    <cofactor evidence="1">
        <name>NAD(+)</name>
        <dbReference type="ChEBI" id="CHEBI:57540"/>
    </cofactor>
    <text evidence="1">Binds 1 NAD(+) per subunit.</text>
</comment>
<comment type="pathway">
    <text evidence="1">Amino-acid degradation; L-histidine degradation into L-glutamate; N-formimidoyl-L-glutamate from L-histidine: step 2/3.</text>
</comment>
<comment type="subcellular location">
    <subcellularLocation>
        <location evidence="1">Cytoplasm</location>
    </subcellularLocation>
</comment>
<comment type="similarity">
    <text evidence="1">Belongs to the urocanase family.</text>
</comment>
<dbReference type="EC" id="4.2.1.49" evidence="1"/>
<dbReference type="EMBL" id="AP009493">
    <property type="protein sequence ID" value="BAG21291.1"/>
    <property type="molecule type" value="Genomic_DNA"/>
</dbReference>
<dbReference type="RefSeq" id="WP_012380624.1">
    <property type="nucleotide sequence ID" value="NC_010572.1"/>
</dbReference>
<dbReference type="SMR" id="B1VUR5"/>
<dbReference type="KEGG" id="sgr:SGR_4462"/>
<dbReference type="PATRIC" id="fig|455632.4.peg.4551"/>
<dbReference type="eggNOG" id="COG2987">
    <property type="taxonomic scope" value="Bacteria"/>
</dbReference>
<dbReference type="HOGENOM" id="CLU_018868_0_1_11"/>
<dbReference type="UniPathway" id="UPA00379">
    <property type="reaction ID" value="UER00550"/>
</dbReference>
<dbReference type="Proteomes" id="UP000001685">
    <property type="component" value="Chromosome"/>
</dbReference>
<dbReference type="GO" id="GO:0005737">
    <property type="term" value="C:cytoplasm"/>
    <property type="evidence" value="ECO:0007669"/>
    <property type="project" value="UniProtKB-SubCell"/>
</dbReference>
<dbReference type="GO" id="GO:0016153">
    <property type="term" value="F:urocanate hydratase activity"/>
    <property type="evidence" value="ECO:0007669"/>
    <property type="project" value="UniProtKB-UniRule"/>
</dbReference>
<dbReference type="GO" id="GO:0019556">
    <property type="term" value="P:L-histidine catabolic process to glutamate and formamide"/>
    <property type="evidence" value="ECO:0007669"/>
    <property type="project" value="UniProtKB-UniPathway"/>
</dbReference>
<dbReference type="GO" id="GO:0019557">
    <property type="term" value="P:L-histidine catabolic process to glutamate and formate"/>
    <property type="evidence" value="ECO:0007669"/>
    <property type="project" value="UniProtKB-UniPathway"/>
</dbReference>
<dbReference type="FunFam" id="3.40.50.10730:FF:000001">
    <property type="entry name" value="Urocanate hydratase"/>
    <property type="match status" value="1"/>
</dbReference>
<dbReference type="Gene3D" id="3.40.50.10730">
    <property type="entry name" value="Urocanase like domains"/>
    <property type="match status" value="1"/>
</dbReference>
<dbReference type="Gene3D" id="3.40.1770.10">
    <property type="entry name" value="Urocanase superfamily"/>
    <property type="match status" value="1"/>
</dbReference>
<dbReference type="HAMAP" id="MF_00577">
    <property type="entry name" value="HutU"/>
    <property type="match status" value="1"/>
</dbReference>
<dbReference type="InterPro" id="IPR055351">
    <property type="entry name" value="Urocanase"/>
</dbReference>
<dbReference type="InterPro" id="IPR023637">
    <property type="entry name" value="Urocanase-like"/>
</dbReference>
<dbReference type="InterPro" id="IPR035401">
    <property type="entry name" value="Urocanase_C"/>
</dbReference>
<dbReference type="InterPro" id="IPR038364">
    <property type="entry name" value="Urocanase_central_sf"/>
</dbReference>
<dbReference type="InterPro" id="IPR023636">
    <property type="entry name" value="Urocanase_CS"/>
</dbReference>
<dbReference type="InterPro" id="IPR035400">
    <property type="entry name" value="Urocanase_N"/>
</dbReference>
<dbReference type="InterPro" id="IPR035085">
    <property type="entry name" value="Urocanase_Rossmann-like"/>
</dbReference>
<dbReference type="InterPro" id="IPR036190">
    <property type="entry name" value="Urocanase_sf"/>
</dbReference>
<dbReference type="NCBIfam" id="TIGR01228">
    <property type="entry name" value="hutU"/>
    <property type="match status" value="1"/>
</dbReference>
<dbReference type="NCBIfam" id="NF003820">
    <property type="entry name" value="PRK05414.1"/>
    <property type="match status" value="1"/>
</dbReference>
<dbReference type="PANTHER" id="PTHR12216">
    <property type="entry name" value="UROCANATE HYDRATASE"/>
    <property type="match status" value="1"/>
</dbReference>
<dbReference type="PANTHER" id="PTHR12216:SF4">
    <property type="entry name" value="UROCANATE HYDRATASE"/>
    <property type="match status" value="1"/>
</dbReference>
<dbReference type="Pfam" id="PF01175">
    <property type="entry name" value="Urocanase"/>
    <property type="match status" value="1"/>
</dbReference>
<dbReference type="Pfam" id="PF17392">
    <property type="entry name" value="Urocanase_C"/>
    <property type="match status" value="1"/>
</dbReference>
<dbReference type="Pfam" id="PF17391">
    <property type="entry name" value="Urocanase_N"/>
    <property type="match status" value="1"/>
</dbReference>
<dbReference type="PIRSF" id="PIRSF001423">
    <property type="entry name" value="Urocanate_hydrat"/>
    <property type="match status" value="1"/>
</dbReference>
<dbReference type="SUPFAM" id="SSF111326">
    <property type="entry name" value="Urocanase"/>
    <property type="match status" value="1"/>
</dbReference>
<dbReference type="PROSITE" id="PS01233">
    <property type="entry name" value="UROCANASE"/>
    <property type="match status" value="1"/>
</dbReference>
<protein>
    <recommendedName>
        <fullName evidence="1">Urocanate hydratase</fullName>
        <shortName evidence="1">Urocanase</shortName>
        <ecNumber evidence="1">4.2.1.49</ecNumber>
    </recommendedName>
    <alternativeName>
        <fullName evidence="1">Imidazolonepropionate hydrolase</fullName>
    </alternativeName>
</protein>